<comment type="catalytic activity">
    <reaction evidence="1">
        <text>tRNA(Phe) + L-phenylalanine + ATP = L-phenylalanyl-tRNA(Phe) + AMP + diphosphate + H(+)</text>
        <dbReference type="Rhea" id="RHEA:19413"/>
        <dbReference type="Rhea" id="RHEA-COMP:9668"/>
        <dbReference type="Rhea" id="RHEA-COMP:9699"/>
        <dbReference type="ChEBI" id="CHEBI:15378"/>
        <dbReference type="ChEBI" id="CHEBI:30616"/>
        <dbReference type="ChEBI" id="CHEBI:33019"/>
        <dbReference type="ChEBI" id="CHEBI:58095"/>
        <dbReference type="ChEBI" id="CHEBI:78442"/>
        <dbReference type="ChEBI" id="CHEBI:78531"/>
        <dbReference type="ChEBI" id="CHEBI:456215"/>
        <dbReference type="EC" id="6.1.1.20"/>
    </reaction>
</comment>
<comment type="cofactor">
    <cofactor evidence="1">
        <name>Mg(2+)</name>
        <dbReference type="ChEBI" id="CHEBI:18420"/>
    </cofactor>
    <text evidence="1">Binds 2 magnesium ions per tetramer.</text>
</comment>
<comment type="subunit">
    <text evidence="1">Tetramer of two alpha and two beta subunits.</text>
</comment>
<comment type="subcellular location">
    <subcellularLocation>
        <location evidence="1">Cytoplasm</location>
    </subcellularLocation>
</comment>
<comment type="similarity">
    <text evidence="1">Belongs to the phenylalanyl-tRNA synthetase beta subunit family. Type 1 subfamily.</text>
</comment>
<dbReference type="EC" id="6.1.1.20" evidence="1"/>
<dbReference type="EMBL" id="CP000240">
    <property type="protein sequence ID" value="ABD03835.1"/>
    <property type="molecule type" value="Genomic_DNA"/>
</dbReference>
<dbReference type="RefSeq" id="WP_011434452.1">
    <property type="nucleotide sequence ID" value="NC_007776.1"/>
</dbReference>
<dbReference type="SMR" id="Q2JHU3"/>
<dbReference type="STRING" id="321332.CYB_2916"/>
<dbReference type="KEGG" id="cyb:CYB_2916"/>
<dbReference type="eggNOG" id="COG0072">
    <property type="taxonomic scope" value="Bacteria"/>
</dbReference>
<dbReference type="HOGENOM" id="CLU_016891_0_0_3"/>
<dbReference type="OrthoDB" id="9805455at2"/>
<dbReference type="Proteomes" id="UP000001938">
    <property type="component" value="Chromosome"/>
</dbReference>
<dbReference type="GO" id="GO:0009328">
    <property type="term" value="C:phenylalanine-tRNA ligase complex"/>
    <property type="evidence" value="ECO:0007669"/>
    <property type="project" value="TreeGrafter"/>
</dbReference>
<dbReference type="GO" id="GO:0005524">
    <property type="term" value="F:ATP binding"/>
    <property type="evidence" value="ECO:0007669"/>
    <property type="project" value="UniProtKB-UniRule"/>
</dbReference>
<dbReference type="GO" id="GO:0000287">
    <property type="term" value="F:magnesium ion binding"/>
    <property type="evidence" value="ECO:0007669"/>
    <property type="project" value="UniProtKB-UniRule"/>
</dbReference>
<dbReference type="GO" id="GO:0004826">
    <property type="term" value="F:phenylalanine-tRNA ligase activity"/>
    <property type="evidence" value="ECO:0007669"/>
    <property type="project" value="UniProtKB-UniRule"/>
</dbReference>
<dbReference type="GO" id="GO:0000049">
    <property type="term" value="F:tRNA binding"/>
    <property type="evidence" value="ECO:0007669"/>
    <property type="project" value="UniProtKB-KW"/>
</dbReference>
<dbReference type="GO" id="GO:0006432">
    <property type="term" value="P:phenylalanyl-tRNA aminoacylation"/>
    <property type="evidence" value="ECO:0007669"/>
    <property type="project" value="UniProtKB-UniRule"/>
</dbReference>
<dbReference type="CDD" id="cd00769">
    <property type="entry name" value="PheRS_beta_core"/>
    <property type="match status" value="1"/>
</dbReference>
<dbReference type="CDD" id="cd02796">
    <property type="entry name" value="tRNA_bind_bactPheRS"/>
    <property type="match status" value="1"/>
</dbReference>
<dbReference type="FunFam" id="2.40.50.140:FF:000045">
    <property type="entry name" value="Phenylalanine--tRNA ligase beta subunit"/>
    <property type="match status" value="1"/>
</dbReference>
<dbReference type="FunFam" id="3.30.70.380:FF:000001">
    <property type="entry name" value="Phenylalanine--tRNA ligase beta subunit"/>
    <property type="match status" value="1"/>
</dbReference>
<dbReference type="Gene3D" id="3.30.56.10">
    <property type="match status" value="2"/>
</dbReference>
<dbReference type="Gene3D" id="3.30.930.10">
    <property type="entry name" value="Bira Bifunctional Protein, Domain 2"/>
    <property type="match status" value="1"/>
</dbReference>
<dbReference type="Gene3D" id="3.30.70.380">
    <property type="entry name" value="Ferrodoxin-fold anticodon-binding domain"/>
    <property type="match status" value="1"/>
</dbReference>
<dbReference type="Gene3D" id="2.40.50.140">
    <property type="entry name" value="Nucleic acid-binding proteins"/>
    <property type="match status" value="1"/>
</dbReference>
<dbReference type="Gene3D" id="3.50.40.10">
    <property type="entry name" value="Phenylalanyl-trna Synthetase, Chain B, domain 3"/>
    <property type="match status" value="1"/>
</dbReference>
<dbReference type="HAMAP" id="MF_00283">
    <property type="entry name" value="Phe_tRNA_synth_beta1"/>
    <property type="match status" value="1"/>
</dbReference>
<dbReference type="InterPro" id="IPR045864">
    <property type="entry name" value="aa-tRNA-synth_II/BPL/LPL"/>
</dbReference>
<dbReference type="InterPro" id="IPR005146">
    <property type="entry name" value="B3/B4_tRNA-bd"/>
</dbReference>
<dbReference type="InterPro" id="IPR009061">
    <property type="entry name" value="DNA-bd_dom_put_sf"/>
</dbReference>
<dbReference type="InterPro" id="IPR005121">
    <property type="entry name" value="Fdx_antiC-bd"/>
</dbReference>
<dbReference type="InterPro" id="IPR036690">
    <property type="entry name" value="Fdx_antiC-bd_sf"/>
</dbReference>
<dbReference type="InterPro" id="IPR012340">
    <property type="entry name" value="NA-bd_OB-fold"/>
</dbReference>
<dbReference type="InterPro" id="IPR045060">
    <property type="entry name" value="Phe-tRNA-ligase_IIc_bsu"/>
</dbReference>
<dbReference type="InterPro" id="IPR004532">
    <property type="entry name" value="Phe-tRNA-ligase_IIc_bsu_bact"/>
</dbReference>
<dbReference type="InterPro" id="IPR020825">
    <property type="entry name" value="Phe-tRNA_synthase-like_B3/B4"/>
</dbReference>
<dbReference type="InterPro" id="IPR041616">
    <property type="entry name" value="PheRS_beta_core"/>
</dbReference>
<dbReference type="InterPro" id="IPR002547">
    <property type="entry name" value="tRNA-bd_dom"/>
</dbReference>
<dbReference type="InterPro" id="IPR033714">
    <property type="entry name" value="tRNA_bind_bactPheRS"/>
</dbReference>
<dbReference type="InterPro" id="IPR005147">
    <property type="entry name" value="tRNA_synthase_B5-dom"/>
</dbReference>
<dbReference type="NCBIfam" id="TIGR00472">
    <property type="entry name" value="pheT_bact"/>
    <property type="match status" value="1"/>
</dbReference>
<dbReference type="PANTHER" id="PTHR10947:SF0">
    <property type="entry name" value="PHENYLALANINE--TRNA LIGASE BETA SUBUNIT"/>
    <property type="match status" value="1"/>
</dbReference>
<dbReference type="PANTHER" id="PTHR10947">
    <property type="entry name" value="PHENYLALANYL-TRNA SYNTHETASE BETA CHAIN AND LEUCINE-RICH REPEAT-CONTAINING PROTEIN 47"/>
    <property type="match status" value="1"/>
</dbReference>
<dbReference type="Pfam" id="PF03483">
    <property type="entry name" value="B3_4"/>
    <property type="match status" value="1"/>
</dbReference>
<dbReference type="Pfam" id="PF03484">
    <property type="entry name" value="B5"/>
    <property type="match status" value="1"/>
</dbReference>
<dbReference type="Pfam" id="PF03147">
    <property type="entry name" value="FDX-ACB"/>
    <property type="match status" value="1"/>
</dbReference>
<dbReference type="Pfam" id="PF01588">
    <property type="entry name" value="tRNA_bind"/>
    <property type="match status" value="1"/>
</dbReference>
<dbReference type="Pfam" id="PF17759">
    <property type="entry name" value="tRNA_synthFbeta"/>
    <property type="match status" value="1"/>
</dbReference>
<dbReference type="SMART" id="SM00873">
    <property type="entry name" value="B3_4"/>
    <property type="match status" value="1"/>
</dbReference>
<dbReference type="SMART" id="SM00874">
    <property type="entry name" value="B5"/>
    <property type="match status" value="1"/>
</dbReference>
<dbReference type="SMART" id="SM00896">
    <property type="entry name" value="FDX-ACB"/>
    <property type="match status" value="1"/>
</dbReference>
<dbReference type="SUPFAM" id="SSF54991">
    <property type="entry name" value="Anticodon-binding domain of PheRS"/>
    <property type="match status" value="1"/>
</dbReference>
<dbReference type="SUPFAM" id="SSF55681">
    <property type="entry name" value="Class II aaRS and biotin synthetases"/>
    <property type="match status" value="1"/>
</dbReference>
<dbReference type="SUPFAM" id="SSF50249">
    <property type="entry name" value="Nucleic acid-binding proteins"/>
    <property type="match status" value="1"/>
</dbReference>
<dbReference type="SUPFAM" id="SSF56037">
    <property type="entry name" value="PheT/TilS domain"/>
    <property type="match status" value="1"/>
</dbReference>
<dbReference type="SUPFAM" id="SSF46955">
    <property type="entry name" value="Putative DNA-binding domain"/>
    <property type="match status" value="1"/>
</dbReference>
<dbReference type="PROSITE" id="PS51483">
    <property type="entry name" value="B5"/>
    <property type="match status" value="1"/>
</dbReference>
<dbReference type="PROSITE" id="PS51447">
    <property type="entry name" value="FDX_ACB"/>
    <property type="match status" value="1"/>
</dbReference>
<dbReference type="PROSITE" id="PS50886">
    <property type="entry name" value="TRBD"/>
    <property type="match status" value="1"/>
</dbReference>
<sequence>MRISLKWLRELVDFQLSPEELGEALTLAGFEVEEIEDRRTWADGVVLGRILAAEPHPNADKLQVCQVDLGSDRPATIVCGAANARPGILVAVATPGTHLPALSLTIAKADKRGVISEGMICSLAELGLEKSSEGIHEFPPDLDLEAHPLGSDVRPLLGLDDVVLDLTSTANRADALSMVGIAREVAALTRNPLRLPPVQPLQAKPIPNFQLRIADAKACPAYSGVLIEGVKVGPSPDWLKHRLAAAGMRSINNVVDITNLILLEWGQPLHAFDWDRLLQVMGKKKPTIEVRLAQPGETLKTLDGQTRTLQADSHLIVAGSQPVALAGVMGGEETEVGSTTTRIFLEAALFDPAVTRRSARSQGLRTEASTRYERGVNFATLDQARDRAVQLILELAGGAVAGLTTFDQRPPLERTLKLRLSRLIDVLGDEVQAADVEEILSALGFQLSRCEGANSQSALSPATETATVASCVWQVVVPPYRLRDIEREIDLIEEFARLYGYDRFSETLPTEPQVGSLSARETFTRQIREVLRGIGLTEVYHISLCPAEEDGSLVRIANPLSPEYSAVRNALLPGLVEAFRFNWDQGNGPLQAFEIGRVFAHALPPNPHPYREAEHIGGILGGDPNPHDWQHRNRPMDWFEAKGLLVSALERLGFGPEFRLDPPEEQSSLLHPGRQASLWIEGSRIGLFGQLHPRLCQEKGLPDQVYGFELQLDPLLESLERRGIVQFVPFSPFPAADRDIAFFAPLDLAVGEIEKVIRRAGGELLQSVQLFDEYRGQGVPAGQRSLAFRLVYRAPDRTLTDAEVEALQNQVRAQLATQFPVTLRS</sequence>
<keyword id="KW-0030">Aminoacyl-tRNA synthetase</keyword>
<keyword id="KW-0067">ATP-binding</keyword>
<keyword id="KW-0963">Cytoplasm</keyword>
<keyword id="KW-0436">Ligase</keyword>
<keyword id="KW-0460">Magnesium</keyword>
<keyword id="KW-0479">Metal-binding</keyword>
<keyword id="KW-0547">Nucleotide-binding</keyword>
<keyword id="KW-0648">Protein biosynthesis</keyword>
<keyword id="KW-1185">Reference proteome</keyword>
<keyword id="KW-0694">RNA-binding</keyword>
<keyword id="KW-0820">tRNA-binding</keyword>
<feature type="chain" id="PRO_0000232825" description="Phenylalanine--tRNA ligase beta subunit">
    <location>
        <begin position="1"/>
        <end position="825"/>
    </location>
</feature>
<feature type="domain" description="tRNA-binding" evidence="1">
    <location>
        <begin position="39"/>
        <end position="154"/>
    </location>
</feature>
<feature type="domain" description="B5" evidence="1">
    <location>
        <begin position="411"/>
        <end position="506"/>
    </location>
</feature>
<feature type="domain" description="FDX-ACB" evidence="1">
    <location>
        <begin position="731"/>
        <end position="824"/>
    </location>
</feature>
<feature type="binding site" evidence="1">
    <location>
        <position position="484"/>
    </location>
    <ligand>
        <name>Mg(2+)</name>
        <dbReference type="ChEBI" id="CHEBI:18420"/>
        <note>shared with alpha subunit</note>
    </ligand>
</feature>
<feature type="binding site" evidence="1">
    <location>
        <position position="490"/>
    </location>
    <ligand>
        <name>Mg(2+)</name>
        <dbReference type="ChEBI" id="CHEBI:18420"/>
        <note>shared with alpha subunit</note>
    </ligand>
</feature>
<feature type="binding site" evidence="1">
    <location>
        <position position="493"/>
    </location>
    <ligand>
        <name>Mg(2+)</name>
        <dbReference type="ChEBI" id="CHEBI:18420"/>
        <note>shared with alpha subunit</note>
    </ligand>
</feature>
<feature type="binding site" evidence="1">
    <location>
        <position position="494"/>
    </location>
    <ligand>
        <name>Mg(2+)</name>
        <dbReference type="ChEBI" id="CHEBI:18420"/>
        <note>shared with alpha subunit</note>
    </ligand>
</feature>
<gene>
    <name evidence="1" type="primary">pheT</name>
    <name type="ordered locus">CYB_2916</name>
</gene>
<evidence type="ECO:0000255" key="1">
    <source>
        <dbReference type="HAMAP-Rule" id="MF_00283"/>
    </source>
</evidence>
<protein>
    <recommendedName>
        <fullName evidence="1">Phenylalanine--tRNA ligase beta subunit</fullName>
        <ecNumber evidence="1">6.1.1.20</ecNumber>
    </recommendedName>
    <alternativeName>
        <fullName evidence="1">Phenylalanyl-tRNA synthetase beta subunit</fullName>
        <shortName evidence="1">PheRS</shortName>
    </alternativeName>
</protein>
<reference key="1">
    <citation type="journal article" date="2007" name="ISME J.">
        <title>Population level functional diversity in a microbial community revealed by comparative genomic and metagenomic analyses.</title>
        <authorList>
            <person name="Bhaya D."/>
            <person name="Grossman A.R."/>
            <person name="Steunou A.-S."/>
            <person name="Khuri N."/>
            <person name="Cohan F.M."/>
            <person name="Hamamura N."/>
            <person name="Melendrez M.C."/>
            <person name="Bateson M.M."/>
            <person name="Ward D.M."/>
            <person name="Heidelberg J.F."/>
        </authorList>
    </citation>
    <scope>NUCLEOTIDE SEQUENCE [LARGE SCALE GENOMIC DNA]</scope>
    <source>
        <strain>JA-2-3B'a(2-13)</strain>
    </source>
</reference>
<organism>
    <name type="scientific">Synechococcus sp. (strain JA-2-3B'a(2-13))</name>
    <name type="common">Cyanobacteria bacterium Yellowstone B-Prime</name>
    <dbReference type="NCBI Taxonomy" id="321332"/>
    <lineage>
        <taxon>Bacteria</taxon>
        <taxon>Bacillati</taxon>
        <taxon>Cyanobacteriota</taxon>
        <taxon>Cyanophyceae</taxon>
        <taxon>Synechococcales</taxon>
        <taxon>Synechococcaceae</taxon>
        <taxon>Synechococcus</taxon>
    </lineage>
</organism>
<proteinExistence type="inferred from homology"/>
<accession>Q2JHU3</accession>
<name>SYFB_SYNJB</name>